<organism>
    <name type="scientific">Danio rerio</name>
    <name type="common">Zebrafish</name>
    <name type="synonym">Brachydanio rerio</name>
    <dbReference type="NCBI Taxonomy" id="7955"/>
    <lineage>
        <taxon>Eukaryota</taxon>
        <taxon>Metazoa</taxon>
        <taxon>Chordata</taxon>
        <taxon>Craniata</taxon>
        <taxon>Vertebrata</taxon>
        <taxon>Euteleostomi</taxon>
        <taxon>Actinopterygii</taxon>
        <taxon>Neopterygii</taxon>
        <taxon>Teleostei</taxon>
        <taxon>Ostariophysi</taxon>
        <taxon>Cypriniformes</taxon>
        <taxon>Danionidae</taxon>
        <taxon>Danioninae</taxon>
        <taxon>Danio</taxon>
    </lineage>
</organism>
<sequence length="499" mass="55221">MENRAMYLTTTHEDRENSSFYEESYDGMNLSKLNLCEEVNSTKYRRKTDNRCGQLDSLTSIKYAIVSLYILVLLTIFGLCIAVSKSHASWRREEALLENVTRLGEQSETLQMSLSQIPSQSDLLENIWKLESLFHNHTEQLRLLGLLTQGLERDIKDLQAFAEHTTDSVAQLWDHLSMISHSSQRNSTHLGDELASTAGSIREQDALLKTMVGNVETLQERLEDMGWTLQTLNHSLGGDVSLHQIKIYELQEKIVNVTHDTLGMKITQTHLEDQLRNEIQVLNVVTADLRLKEWEHSMALKNLTIFQGPPGPKGEKGDVGPLGPDGIPGWIGPRGLTGEKGVQGPRGLAGRNGQDGHNGDKGEVGPEGPKGVRGERGPKGEKGERGDKQGEKVEDAVVRLVNGSGPHEGRVEVLHDLRWGTVCDDVWDIKDGDVVCRMLGFRGAKEIHKTGRFGQGTGLIWMDDVACVGTEDSIDLCKFSGWGKTNCGHVEDAGVTCNV</sequence>
<accession>Q5RFW0</accession>
<comment type="function">
    <text evidence="1">Ferritin receptor that mediates non-transferrin-dependent delivery of iron. Mediates cellular uptake of ferritin-bound iron by stimulating ferritin endocytosis from the cell surface with consequent iron delivery within the cell. Delivery of iron to cells by ferritin is required for the development of specific cell types, suggesting the existence of cell type-specific mechanisms of iron traffic in organogenesis, which alternatively utilize transferrin or non-transferrin iron delivery pathways.</text>
</comment>
<comment type="subunit">
    <text evidence="1">Homotrimer.</text>
</comment>
<comment type="subcellular location">
    <subcellularLocation>
        <location evidence="1">Cell membrane</location>
        <topology evidence="1">Single-pass type II membrane protein</topology>
    </subcellularLocation>
</comment>
<comment type="similarity">
    <text evidence="1">Belongs to the SCARA5 family.</text>
</comment>
<protein>
    <recommendedName>
        <fullName evidence="1">Scavenger receptor class A member 5</fullName>
    </recommendedName>
</protein>
<keyword id="KW-1003">Cell membrane</keyword>
<keyword id="KW-1015">Disulfide bond</keyword>
<keyword id="KW-0325">Glycoprotein</keyword>
<keyword id="KW-0406">Ion transport</keyword>
<keyword id="KW-0408">Iron</keyword>
<keyword id="KW-0410">Iron transport</keyword>
<keyword id="KW-0472">Membrane</keyword>
<keyword id="KW-0675">Receptor</keyword>
<keyword id="KW-1185">Reference proteome</keyword>
<keyword id="KW-0735">Signal-anchor</keyword>
<keyword id="KW-0812">Transmembrane</keyword>
<keyword id="KW-1133">Transmembrane helix</keyword>
<keyword id="KW-0813">Transport</keyword>
<proteinExistence type="inferred from homology"/>
<gene>
    <name evidence="1" type="primary">scara5</name>
    <name type="ORF">si:ch211-200p13.4</name>
</gene>
<reference key="1">
    <citation type="journal article" date="2013" name="Nature">
        <title>The zebrafish reference genome sequence and its relationship to the human genome.</title>
        <authorList>
            <person name="Howe K."/>
            <person name="Clark M.D."/>
            <person name="Torroja C.F."/>
            <person name="Torrance J."/>
            <person name="Berthelot C."/>
            <person name="Muffato M."/>
            <person name="Collins J.E."/>
            <person name="Humphray S."/>
            <person name="McLaren K."/>
            <person name="Matthews L."/>
            <person name="McLaren S."/>
            <person name="Sealy I."/>
            <person name="Caccamo M."/>
            <person name="Churcher C."/>
            <person name="Scott C."/>
            <person name="Barrett J.C."/>
            <person name="Koch R."/>
            <person name="Rauch G.J."/>
            <person name="White S."/>
            <person name="Chow W."/>
            <person name="Kilian B."/>
            <person name="Quintais L.T."/>
            <person name="Guerra-Assuncao J.A."/>
            <person name="Zhou Y."/>
            <person name="Gu Y."/>
            <person name="Yen J."/>
            <person name="Vogel J.H."/>
            <person name="Eyre T."/>
            <person name="Redmond S."/>
            <person name="Banerjee R."/>
            <person name="Chi J."/>
            <person name="Fu B."/>
            <person name="Langley E."/>
            <person name="Maguire S.F."/>
            <person name="Laird G.K."/>
            <person name="Lloyd D."/>
            <person name="Kenyon E."/>
            <person name="Donaldson S."/>
            <person name="Sehra H."/>
            <person name="Almeida-King J."/>
            <person name="Loveland J."/>
            <person name="Trevanion S."/>
            <person name="Jones M."/>
            <person name="Quail M."/>
            <person name="Willey D."/>
            <person name="Hunt A."/>
            <person name="Burton J."/>
            <person name="Sims S."/>
            <person name="McLay K."/>
            <person name="Plumb B."/>
            <person name="Davis J."/>
            <person name="Clee C."/>
            <person name="Oliver K."/>
            <person name="Clark R."/>
            <person name="Riddle C."/>
            <person name="Elliot D."/>
            <person name="Threadgold G."/>
            <person name="Harden G."/>
            <person name="Ware D."/>
            <person name="Begum S."/>
            <person name="Mortimore B."/>
            <person name="Kerry G."/>
            <person name="Heath P."/>
            <person name="Phillimore B."/>
            <person name="Tracey A."/>
            <person name="Corby N."/>
            <person name="Dunn M."/>
            <person name="Johnson C."/>
            <person name="Wood J."/>
            <person name="Clark S."/>
            <person name="Pelan S."/>
            <person name="Griffiths G."/>
            <person name="Smith M."/>
            <person name="Glithero R."/>
            <person name="Howden P."/>
            <person name="Barker N."/>
            <person name="Lloyd C."/>
            <person name="Stevens C."/>
            <person name="Harley J."/>
            <person name="Holt K."/>
            <person name="Panagiotidis G."/>
            <person name="Lovell J."/>
            <person name="Beasley H."/>
            <person name="Henderson C."/>
            <person name="Gordon D."/>
            <person name="Auger K."/>
            <person name="Wright D."/>
            <person name="Collins J."/>
            <person name="Raisen C."/>
            <person name="Dyer L."/>
            <person name="Leung K."/>
            <person name="Robertson L."/>
            <person name="Ambridge K."/>
            <person name="Leongamornlert D."/>
            <person name="McGuire S."/>
            <person name="Gilderthorp R."/>
            <person name="Griffiths C."/>
            <person name="Manthravadi D."/>
            <person name="Nichol S."/>
            <person name="Barker G."/>
            <person name="Whitehead S."/>
            <person name="Kay M."/>
            <person name="Brown J."/>
            <person name="Murnane C."/>
            <person name="Gray E."/>
            <person name="Humphries M."/>
            <person name="Sycamore N."/>
            <person name="Barker D."/>
            <person name="Saunders D."/>
            <person name="Wallis J."/>
            <person name="Babbage A."/>
            <person name="Hammond S."/>
            <person name="Mashreghi-Mohammadi M."/>
            <person name="Barr L."/>
            <person name="Martin S."/>
            <person name="Wray P."/>
            <person name="Ellington A."/>
            <person name="Matthews N."/>
            <person name="Ellwood M."/>
            <person name="Woodmansey R."/>
            <person name="Clark G."/>
            <person name="Cooper J."/>
            <person name="Tromans A."/>
            <person name="Grafham D."/>
            <person name="Skuce C."/>
            <person name="Pandian R."/>
            <person name="Andrews R."/>
            <person name="Harrison E."/>
            <person name="Kimberley A."/>
            <person name="Garnett J."/>
            <person name="Fosker N."/>
            <person name="Hall R."/>
            <person name="Garner P."/>
            <person name="Kelly D."/>
            <person name="Bird C."/>
            <person name="Palmer S."/>
            <person name="Gehring I."/>
            <person name="Berger A."/>
            <person name="Dooley C.M."/>
            <person name="Ersan-Urun Z."/>
            <person name="Eser C."/>
            <person name="Geiger H."/>
            <person name="Geisler M."/>
            <person name="Karotki L."/>
            <person name="Kirn A."/>
            <person name="Konantz J."/>
            <person name="Konantz M."/>
            <person name="Oberlander M."/>
            <person name="Rudolph-Geiger S."/>
            <person name="Teucke M."/>
            <person name="Lanz C."/>
            <person name="Raddatz G."/>
            <person name="Osoegawa K."/>
            <person name="Zhu B."/>
            <person name="Rapp A."/>
            <person name="Widaa S."/>
            <person name="Langford C."/>
            <person name="Yang F."/>
            <person name="Schuster S.C."/>
            <person name="Carter N.P."/>
            <person name="Harrow J."/>
            <person name="Ning Z."/>
            <person name="Herrero J."/>
            <person name="Searle S.M."/>
            <person name="Enright A."/>
            <person name="Geisler R."/>
            <person name="Plasterk R.H."/>
            <person name="Lee C."/>
            <person name="Westerfield M."/>
            <person name="de Jong P.J."/>
            <person name="Zon L.I."/>
            <person name="Postlethwait J.H."/>
            <person name="Nusslein-Volhard C."/>
            <person name="Hubbard T.J."/>
            <person name="Roest Crollius H."/>
            <person name="Rogers J."/>
            <person name="Stemple D.L."/>
        </authorList>
    </citation>
    <scope>NUCLEOTIDE SEQUENCE [LARGE SCALE GENOMIC DNA]</scope>
    <source>
        <strain>Tuebingen</strain>
    </source>
</reference>
<dbReference type="EMBL" id="CR536610">
    <property type="protein sequence ID" value="CAI11749.1"/>
    <property type="molecule type" value="Genomic_DNA"/>
</dbReference>
<dbReference type="RefSeq" id="NP_001025361.1">
    <property type="nucleotide sequence ID" value="NM_001030190.1"/>
</dbReference>
<dbReference type="RefSeq" id="XP_005160375.1">
    <property type="nucleotide sequence ID" value="XM_005160318.5"/>
</dbReference>
<dbReference type="SMR" id="Q5RFW0"/>
<dbReference type="FunCoup" id="Q5RFW0">
    <property type="interactions" value="1482"/>
</dbReference>
<dbReference type="STRING" id="7955.ENSDARP00000126688"/>
<dbReference type="GlyCosmos" id="Q5RFW0">
    <property type="glycosylation" value="7 sites, No reported glycans"/>
</dbReference>
<dbReference type="PaxDb" id="7955-ENSDARP00000126688"/>
<dbReference type="Ensembl" id="ENSDART00000152373">
    <property type="protein sequence ID" value="ENSDARP00000126688"/>
    <property type="gene ID" value="ENSDARG00000010425"/>
</dbReference>
<dbReference type="Ensembl" id="ENSDART00000181830">
    <property type="protein sequence ID" value="ENSDARP00000150337"/>
    <property type="gene ID" value="ENSDARG00000010425"/>
</dbReference>
<dbReference type="GeneID" id="564500"/>
<dbReference type="KEGG" id="dre:564500"/>
<dbReference type="AGR" id="ZFIN:ZDB-GENE-041210-258"/>
<dbReference type="CTD" id="286133"/>
<dbReference type="ZFIN" id="ZDB-GENE-041210-258">
    <property type="gene designation" value="scara5"/>
</dbReference>
<dbReference type="eggNOG" id="ENOG502QSM1">
    <property type="taxonomic scope" value="Eukaryota"/>
</dbReference>
<dbReference type="HOGENOM" id="CLU_041152_1_0_1"/>
<dbReference type="InParanoid" id="Q5RFW0"/>
<dbReference type="OMA" id="CHKRRVN"/>
<dbReference type="OrthoDB" id="536948at2759"/>
<dbReference type="PhylomeDB" id="Q5RFW0"/>
<dbReference type="TreeFam" id="TF330855"/>
<dbReference type="Reactome" id="R-DRE-5683826">
    <property type="pathway name" value="Surfactant metabolism"/>
</dbReference>
<dbReference type="PRO" id="PR:Q5RFW0"/>
<dbReference type="Proteomes" id="UP000000437">
    <property type="component" value="Chromosome 20"/>
</dbReference>
<dbReference type="Bgee" id="ENSDARG00000010425">
    <property type="expression patterns" value="Expressed in testis and 13 other cell types or tissues"/>
</dbReference>
<dbReference type="GO" id="GO:0005886">
    <property type="term" value="C:plasma membrane"/>
    <property type="evidence" value="ECO:0000250"/>
    <property type="project" value="UniProtKB"/>
</dbReference>
<dbReference type="GO" id="GO:0070287">
    <property type="term" value="F:ferritin receptor activity"/>
    <property type="evidence" value="ECO:0000250"/>
    <property type="project" value="UniProtKB"/>
</dbReference>
<dbReference type="GO" id="GO:0006897">
    <property type="term" value="P:endocytosis"/>
    <property type="evidence" value="ECO:0000250"/>
    <property type="project" value="UniProtKB"/>
</dbReference>
<dbReference type="GO" id="GO:0006879">
    <property type="term" value="P:intracellular iron ion homeostasis"/>
    <property type="evidence" value="ECO:0000250"/>
    <property type="project" value="UniProtKB"/>
</dbReference>
<dbReference type="GO" id="GO:0034755">
    <property type="term" value="P:iron ion transmembrane transport"/>
    <property type="evidence" value="ECO:0000250"/>
    <property type="project" value="UniProtKB"/>
</dbReference>
<dbReference type="GO" id="GO:0070207">
    <property type="term" value="P:protein homotrimerization"/>
    <property type="evidence" value="ECO:0000250"/>
    <property type="project" value="UniProtKB"/>
</dbReference>
<dbReference type="FunFam" id="3.10.250.10:FF:000011">
    <property type="entry name" value="Scavenger receptor class A member 5"/>
    <property type="match status" value="1"/>
</dbReference>
<dbReference type="Gene3D" id="3.10.250.10">
    <property type="entry name" value="SRCR-like domain"/>
    <property type="match status" value="1"/>
</dbReference>
<dbReference type="HAMAP" id="MF_03070">
    <property type="entry name" value="SCARA5"/>
    <property type="match status" value="1"/>
</dbReference>
<dbReference type="InterPro" id="IPR008160">
    <property type="entry name" value="Collagen"/>
</dbReference>
<dbReference type="InterPro" id="IPR034726">
    <property type="entry name" value="SCARA5"/>
</dbReference>
<dbReference type="InterPro" id="IPR001190">
    <property type="entry name" value="SRCR"/>
</dbReference>
<dbReference type="InterPro" id="IPR036772">
    <property type="entry name" value="SRCR-like_dom_sf"/>
</dbReference>
<dbReference type="PANTHER" id="PTHR48071:SF24">
    <property type="entry name" value="DELETED IN MALIGNANT BRAIN TUMORS 1 PROTEIN-LIKE"/>
    <property type="match status" value="1"/>
</dbReference>
<dbReference type="PANTHER" id="PTHR48071">
    <property type="entry name" value="SRCR DOMAIN-CONTAINING PROTEIN"/>
    <property type="match status" value="1"/>
</dbReference>
<dbReference type="Pfam" id="PF01391">
    <property type="entry name" value="Collagen"/>
    <property type="match status" value="2"/>
</dbReference>
<dbReference type="Pfam" id="PF00530">
    <property type="entry name" value="SRCR"/>
    <property type="match status" value="1"/>
</dbReference>
<dbReference type="PRINTS" id="PR00258">
    <property type="entry name" value="SPERACTRCPTR"/>
</dbReference>
<dbReference type="SMART" id="SM00202">
    <property type="entry name" value="SR"/>
    <property type="match status" value="1"/>
</dbReference>
<dbReference type="SUPFAM" id="SSF56487">
    <property type="entry name" value="SRCR-like"/>
    <property type="match status" value="1"/>
</dbReference>
<dbReference type="PROSITE" id="PS00420">
    <property type="entry name" value="SRCR_1"/>
    <property type="match status" value="1"/>
</dbReference>
<dbReference type="PROSITE" id="PS50287">
    <property type="entry name" value="SRCR_2"/>
    <property type="match status" value="1"/>
</dbReference>
<evidence type="ECO:0000255" key="1">
    <source>
        <dbReference type="HAMAP-Rule" id="MF_03070"/>
    </source>
</evidence>
<evidence type="ECO:0000256" key="2">
    <source>
        <dbReference type="SAM" id="MobiDB-lite"/>
    </source>
</evidence>
<name>SCAR5_DANRE</name>
<feature type="chain" id="PRO_0000279520" description="Scavenger receptor class A member 5">
    <location>
        <begin position="1"/>
        <end position="499"/>
    </location>
</feature>
<feature type="topological domain" description="Cytoplasmic" evidence="1">
    <location>
        <begin position="1"/>
        <end position="63"/>
    </location>
</feature>
<feature type="transmembrane region" description="Helical; Signal-anchor for type II membrane protein" evidence="1">
    <location>
        <begin position="64"/>
        <end position="84"/>
    </location>
</feature>
<feature type="topological domain" description="Extracellular" evidence="1">
    <location>
        <begin position="85"/>
        <end position="499"/>
    </location>
</feature>
<feature type="domain" description="Collagen-like" evidence="1">
    <location>
        <begin position="307"/>
        <end position="359"/>
    </location>
</feature>
<feature type="domain" description="SRCR" evidence="1">
    <location>
        <begin position="398"/>
        <end position="498"/>
    </location>
</feature>
<feature type="region of interest" description="Disordered" evidence="2">
    <location>
        <begin position="305"/>
        <end position="392"/>
    </location>
</feature>
<feature type="compositionally biased region" description="Basic and acidic residues" evidence="2">
    <location>
        <begin position="357"/>
        <end position="392"/>
    </location>
</feature>
<feature type="glycosylation site" description="N-linked (GlcNAc...) asparagine" evidence="1">
    <location>
        <position position="99"/>
    </location>
</feature>
<feature type="glycosylation site" description="N-linked (GlcNAc...) asparagine" evidence="1">
    <location>
        <position position="136"/>
    </location>
</feature>
<feature type="glycosylation site" description="N-linked (GlcNAc...) asparagine" evidence="1">
    <location>
        <position position="186"/>
    </location>
</feature>
<feature type="glycosylation site" description="N-linked (GlcNAc...) asparagine" evidence="1">
    <location>
        <position position="233"/>
    </location>
</feature>
<feature type="glycosylation site" description="N-linked (GlcNAc...) asparagine" evidence="1">
    <location>
        <position position="256"/>
    </location>
</feature>
<feature type="glycosylation site" description="N-linked (GlcNAc...) asparagine" evidence="1">
    <location>
        <position position="302"/>
    </location>
</feature>
<feature type="glycosylation site" description="N-linked (GlcNAc...) asparagine" evidence="1">
    <location>
        <position position="402"/>
    </location>
</feature>
<feature type="disulfide bond" evidence="1">
    <location>
        <begin position="423"/>
        <end position="487"/>
    </location>
</feature>
<feature type="disulfide bond" evidence="1">
    <location>
        <begin position="436"/>
        <end position="497"/>
    </location>
</feature>
<feature type="disulfide bond" evidence="1">
    <location>
        <begin position="467"/>
        <end position="477"/>
    </location>
</feature>